<reference key="1">
    <citation type="journal article" date="2002" name="Nucleic Acids Res.">
        <title>Genome sequence of Oceanobacillus iheyensis isolated from the Iheya Ridge and its unexpected adaptive capabilities to extreme environments.</title>
        <authorList>
            <person name="Takami H."/>
            <person name="Takaki Y."/>
            <person name="Uchiyama I."/>
        </authorList>
    </citation>
    <scope>NUCLEOTIDE SEQUENCE [LARGE SCALE GENOMIC DNA]</scope>
    <source>
        <strain>DSM 14371 / CIP 107618 / JCM 11309 / KCTC 3954 / HTE831</strain>
    </source>
</reference>
<organism>
    <name type="scientific">Oceanobacillus iheyensis (strain DSM 14371 / CIP 107618 / JCM 11309 / KCTC 3954 / HTE831)</name>
    <dbReference type="NCBI Taxonomy" id="221109"/>
    <lineage>
        <taxon>Bacteria</taxon>
        <taxon>Bacillati</taxon>
        <taxon>Bacillota</taxon>
        <taxon>Bacilli</taxon>
        <taxon>Bacillales</taxon>
        <taxon>Bacillaceae</taxon>
        <taxon>Oceanobacillus</taxon>
    </lineage>
</organism>
<keyword id="KW-0413">Isomerase</keyword>
<keyword id="KW-1185">Reference proteome</keyword>
<keyword id="KW-0819">tRNA processing</keyword>
<protein>
    <recommendedName>
        <fullName evidence="1">tRNA pseudouridine synthase A</fullName>
        <ecNumber evidence="1">5.4.99.12</ecNumber>
    </recommendedName>
    <alternativeName>
        <fullName evidence="1">tRNA pseudouridine(38-40) synthase</fullName>
    </alternativeName>
    <alternativeName>
        <fullName evidence="1">tRNA pseudouridylate synthase I</fullName>
    </alternativeName>
    <alternativeName>
        <fullName evidence="1">tRNA-uridine isomerase I</fullName>
    </alternativeName>
</protein>
<feature type="chain" id="PRO_0000057423" description="tRNA pseudouridine synthase A">
    <location>
        <begin position="1"/>
        <end position="253"/>
    </location>
</feature>
<feature type="active site" description="Nucleophile" evidence="1">
    <location>
        <position position="53"/>
    </location>
</feature>
<feature type="binding site" evidence="1">
    <location>
        <position position="111"/>
    </location>
    <ligand>
        <name>substrate</name>
    </ligand>
</feature>
<sequence length="253" mass="29170">MERLKCTVSYDGSDFAGFQVQPDHRTVQGVLEKALYNMHKGKSIRIQASGRTDTGVHAVGQVIHFDSPLEIPERNWKQALNTLLPDDVRIQKVEKKTEEFHARYSVKEKEYHYFVLNEEDPNVFQRGYVYHEPRKLDLERMQEACQYLEGTHDFTSFSSAKSSVKGSKVRTLYHVSCHQTGTNIEFIFRGSGFLYNMVRIMMSVLIDVGKGKRNPEDIIDLLASKNRQQIGKTMAPQGLYLWRVSYEENGNNV</sequence>
<dbReference type="EC" id="5.4.99.12" evidence="1"/>
<dbReference type="EMBL" id="BA000028">
    <property type="protein sequence ID" value="BAC12106.1"/>
    <property type="molecule type" value="Genomic_DNA"/>
</dbReference>
<dbReference type="RefSeq" id="WP_011064551.1">
    <property type="nucleotide sequence ID" value="NC_004193.1"/>
</dbReference>
<dbReference type="SMR" id="Q8CXP1"/>
<dbReference type="STRING" id="221109.gene:10732340"/>
<dbReference type="KEGG" id="oih:OB0150"/>
<dbReference type="eggNOG" id="COG0101">
    <property type="taxonomic scope" value="Bacteria"/>
</dbReference>
<dbReference type="HOGENOM" id="CLU_014673_0_1_9"/>
<dbReference type="OrthoDB" id="9811823at2"/>
<dbReference type="PhylomeDB" id="Q8CXP1"/>
<dbReference type="Proteomes" id="UP000000822">
    <property type="component" value="Chromosome"/>
</dbReference>
<dbReference type="GO" id="GO:0003723">
    <property type="term" value="F:RNA binding"/>
    <property type="evidence" value="ECO:0007669"/>
    <property type="project" value="InterPro"/>
</dbReference>
<dbReference type="GO" id="GO:0160147">
    <property type="term" value="F:tRNA pseudouridine(38-40) synthase activity"/>
    <property type="evidence" value="ECO:0007669"/>
    <property type="project" value="UniProtKB-EC"/>
</dbReference>
<dbReference type="GO" id="GO:0031119">
    <property type="term" value="P:tRNA pseudouridine synthesis"/>
    <property type="evidence" value="ECO:0007669"/>
    <property type="project" value="UniProtKB-UniRule"/>
</dbReference>
<dbReference type="CDD" id="cd02570">
    <property type="entry name" value="PseudoU_synth_EcTruA"/>
    <property type="match status" value="1"/>
</dbReference>
<dbReference type="FunFam" id="3.30.70.580:FF:000001">
    <property type="entry name" value="tRNA pseudouridine synthase A"/>
    <property type="match status" value="1"/>
</dbReference>
<dbReference type="Gene3D" id="3.30.70.660">
    <property type="entry name" value="Pseudouridine synthase I, catalytic domain, C-terminal subdomain"/>
    <property type="match status" value="1"/>
</dbReference>
<dbReference type="Gene3D" id="3.30.70.580">
    <property type="entry name" value="Pseudouridine synthase I, catalytic domain, N-terminal subdomain"/>
    <property type="match status" value="1"/>
</dbReference>
<dbReference type="HAMAP" id="MF_00171">
    <property type="entry name" value="TruA"/>
    <property type="match status" value="1"/>
</dbReference>
<dbReference type="InterPro" id="IPR020103">
    <property type="entry name" value="PsdUridine_synth_cat_dom_sf"/>
</dbReference>
<dbReference type="InterPro" id="IPR001406">
    <property type="entry name" value="PsdUridine_synth_TruA"/>
</dbReference>
<dbReference type="InterPro" id="IPR020097">
    <property type="entry name" value="PsdUridine_synth_TruA_a/b_dom"/>
</dbReference>
<dbReference type="InterPro" id="IPR020095">
    <property type="entry name" value="PsdUridine_synth_TruA_C"/>
</dbReference>
<dbReference type="InterPro" id="IPR020094">
    <property type="entry name" value="TruA/RsuA/RluB/E/F_N"/>
</dbReference>
<dbReference type="NCBIfam" id="TIGR00071">
    <property type="entry name" value="hisT_truA"/>
    <property type="match status" value="1"/>
</dbReference>
<dbReference type="PANTHER" id="PTHR11142">
    <property type="entry name" value="PSEUDOURIDYLATE SYNTHASE"/>
    <property type="match status" value="1"/>
</dbReference>
<dbReference type="PANTHER" id="PTHR11142:SF0">
    <property type="entry name" value="TRNA PSEUDOURIDINE SYNTHASE-LIKE 1"/>
    <property type="match status" value="1"/>
</dbReference>
<dbReference type="Pfam" id="PF01416">
    <property type="entry name" value="PseudoU_synth_1"/>
    <property type="match status" value="2"/>
</dbReference>
<dbReference type="PIRSF" id="PIRSF001430">
    <property type="entry name" value="tRNA_psdUrid_synth"/>
    <property type="match status" value="1"/>
</dbReference>
<dbReference type="SUPFAM" id="SSF55120">
    <property type="entry name" value="Pseudouridine synthase"/>
    <property type="match status" value="1"/>
</dbReference>
<comment type="function">
    <text evidence="1">Formation of pseudouridine at positions 38, 39 and 40 in the anticodon stem and loop of transfer RNAs.</text>
</comment>
<comment type="catalytic activity">
    <reaction evidence="1">
        <text>uridine(38/39/40) in tRNA = pseudouridine(38/39/40) in tRNA</text>
        <dbReference type="Rhea" id="RHEA:22376"/>
        <dbReference type="Rhea" id="RHEA-COMP:10085"/>
        <dbReference type="Rhea" id="RHEA-COMP:10087"/>
        <dbReference type="ChEBI" id="CHEBI:65314"/>
        <dbReference type="ChEBI" id="CHEBI:65315"/>
        <dbReference type="EC" id="5.4.99.12"/>
    </reaction>
</comment>
<comment type="subunit">
    <text evidence="1">Homodimer.</text>
</comment>
<comment type="similarity">
    <text evidence="1">Belongs to the tRNA pseudouridine synthase TruA family.</text>
</comment>
<gene>
    <name evidence="1" type="primary">truA</name>
    <name type="ordered locus">OB0150</name>
</gene>
<evidence type="ECO:0000255" key="1">
    <source>
        <dbReference type="HAMAP-Rule" id="MF_00171"/>
    </source>
</evidence>
<accession>Q8CXP1</accession>
<name>TRUA_OCEIH</name>
<proteinExistence type="inferred from homology"/>